<accession>O09165</accession>
<gene>
    <name type="primary">Casq1</name>
</gene>
<sequence>MRATDRMGARAVSELRLALLFVLVLGTPRLGVQGEDGLDFPEYDGVDRVINVNAKNYKNVFKKYEVLALLYHEPPEDDKASQRQFEMEELILELAAQVLEDKGVGFGLVDSEKDAAVAKKLGLTEEDSVYVFKGDEVIEYDGEFSADTLVEFLLDVLEDPVELIEGERELQAFENIEDEIKLIGYFKSKDSEHYKAYEDAAEEFHPYIPFFATFDSKVAKKLTLKLNEIDFYEAFMEEPMTIPDKPNSEEEIVSFVEEHRRSTLRKLKPESMYETWEDDLDGIHIVAFAEEADPDGYEFLETLKAVAQDNTENPDLSIIWIDPDDFPLLVPYWEKTFDIDLSAPQIGVVNVTDADSIWMEMDNEEDLPSADELEDWLEDVLEGEINTEDDDDDDDDDDDDDDDDD</sequence>
<feature type="signal peptide" evidence="8">
    <location>
        <begin position="1"/>
        <end position="34"/>
    </location>
</feature>
<feature type="chain" id="PRO_0000412170" description="Calsequestrin-1">
    <location>
        <begin position="35"/>
        <end position="405"/>
    </location>
</feature>
<feature type="region of interest" description="Disordered" evidence="5">
    <location>
        <begin position="382"/>
        <end position="405"/>
    </location>
</feature>
<feature type="modified residue" description="Phosphotyrosine" evidence="2">
    <location>
        <position position="43"/>
    </location>
</feature>
<feature type="modified residue" description="Phosphoserine" evidence="2">
    <location>
        <position position="81"/>
    </location>
</feature>
<feature type="modified residue" description="Phosphothreonine" evidence="2">
    <location>
        <position position="124"/>
    </location>
</feature>
<feature type="modified residue" description="Phosphoserine" evidence="2">
    <location>
        <position position="216"/>
    </location>
</feature>
<feature type="glycosylation site" description="N-linked (GlcNAc...) asparagine" evidence="4">
    <location>
        <position position="350"/>
    </location>
</feature>
<evidence type="ECO:0000250" key="1">
    <source>
        <dbReference type="UniProtKB" id="P07221"/>
    </source>
</evidence>
<evidence type="ECO:0000250" key="2">
    <source>
        <dbReference type="UniProtKB" id="P19633"/>
    </source>
</evidence>
<evidence type="ECO:0000250" key="3">
    <source>
        <dbReference type="UniProtKB" id="P31415"/>
    </source>
</evidence>
<evidence type="ECO:0000255" key="4"/>
<evidence type="ECO:0000256" key="5">
    <source>
        <dbReference type="SAM" id="MobiDB-lite"/>
    </source>
</evidence>
<evidence type="ECO:0000269" key="6">
    <source>
    </source>
</evidence>
<evidence type="ECO:0000269" key="7">
    <source>
    </source>
</evidence>
<evidence type="ECO:0000269" key="8">
    <source>
    </source>
</evidence>
<evidence type="ECO:0000269" key="9">
    <source>
    </source>
</evidence>
<evidence type="ECO:0000303" key="10">
    <source>
    </source>
</evidence>
<evidence type="ECO:0000305" key="11"/>
<comment type="function">
    <text evidence="3 6 7 8">Calsequestrin is a high-capacity, moderate affinity, calcium-binding protein and thus acts as an internal calcium store in muscle. Calcium ions are bound by clusters of acidic residues at the protein surface, often at the interface between subunits. Can bind around 80 Ca(2+) ions (By similarity). Regulates the release of lumenal Ca(2+) via the calcium release channel RYR1; this plays an important role in triggering muscle contraction. Negatively regulates store-operated Ca(2+) entry (SOCE) activity (By similarity).</text>
</comment>
<comment type="subunit">
    <text evidence="1 3">Monomer; increases in response to a depletion of intracellular calcium. Homodimer. Homotetramer and homopolymer. Can form linear homooligomers. Ca(2+) ions promote oligomerization. Interacts (via C-terminal end and preferentially with the monomeric form) with STIM1; this interaction increases in response to a depletion of intracellular calcium, decreases both STIM1 aggregation and clustering, interaction of STIM1 with ORAI1 and store-operated Ca(2+) entry (SOCE) activity. Interacts with ASPH and TRDN.</text>
</comment>
<comment type="subcellular location">
    <subcellularLocation>
        <location evidence="3">Endoplasmic reticulum</location>
    </subcellularLocation>
    <subcellularLocation>
        <location evidence="3">Sarcoplasmic reticulum</location>
    </subcellularLocation>
    <subcellularLocation>
        <location evidence="7 8">Sarcoplasmic reticulum lumen</location>
    </subcellularLocation>
    <subcellularLocation>
        <location>Sarcoplasmic reticulum membrane</location>
        <topology>Peripheral membrane protein</topology>
        <orientation evidence="1">Lumenal side</orientation>
    </subcellularLocation>
    <subcellularLocation>
        <location evidence="8">Mitochondrion matrix</location>
    </subcellularLocation>
    <text evidence="3 7">This isoform of calsequestrin occurs in the sarcoplasmic reticulum's terminal cisternae luminal spaces of fast skeletal muscle cells (PubMed:22049211). Preferentially forms linear and round aggregates in the endoplasmic reticulum (ER) of resting cells. In a minority of cells, homogeneously detected in the ER lumen. Colocalizes with STIM1 at endoplasmic reticulum in response to a depletion of intracellular calcium (By similarity).</text>
</comment>
<comment type="tissue specificity">
    <text evidence="6 7 8 9">Detected in skeletal muscle (at protein level). Detected in skeletal muscle.</text>
</comment>
<comment type="PTM">
    <text evidence="1">N-glycosylated.</text>
</comment>
<comment type="disruption phenotype">
    <text evidence="6">Mice are viable and fertile, but have a lower body weight than wild-type, due to a reduction in fast-twitch muscle mass. Fast-twitch muscle from mutant mice exhibits slower contraction kinetics and requires more time to achieve peak tension and to achieve half-relaxation after a contraction. Fast-twitch muscle fibers from mutant mice show a strikingly altered structure of the calcium release units in the sarcoplasmic reticulum with a strongly increased number of ryanodine receptors, plus narrower sarcoplasmic reticulum cisternae. In addition, the number of mitochondria is increased in mutant muscle. Mutant muscle fibers show smaller calcium transients upon electrical stimulation and release less Ca(2+) in response to caffeine.</text>
</comment>
<comment type="similarity">
    <text evidence="11">Belongs to the calsequestrin family.</text>
</comment>
<comment type="sequence caution" evidence="11">
    <conflict type="erroneous initiation">
        <sequence resource="EMBL-CDS" id="AAC63616"/>
    </conflict>
    <text>Truncated N-terminus.</text>
</comment>
<reference key="1">
    <citation type="journal article" date="1998" name="Gene">
        <title>Cloning of the genes encoding mouse cardiac and skeletal calsequestrins: expression pattern during embryogenesis.</title>
        <authorList>
            <person name="Park K.-W."/>
            <person name="Goo J.H."/>
            <person name="Chung H.-S."/>
            <person name="Kim H."/>
            <person name="Kim D.-H."/>
            <person name="Park W.-J."/>
        </authorList>
    </citation>
    <scope>NUCLEOTIDE SEQUENCE [MRNA]</scope>
    <scope>TISSUE SPECIFICITY</scope>
</reference>
<reference key="2">
    <citation type="journal article" date="2009" name="PLoS Biol.">
        <title>Lineage-specific biology revealed by a finished genome assembly of the mouse.</title>
        <authorList>
            <person name="Church D.M."/>
            <person name="Goodstadt L."/>
            <person name="Hillier L.W."/>
            <person name="Zody M.C."/>
            <person name="Goldstein S."/>
            <person name="She X."/>
            <person name="Bult C.J."/>
            <person name="Agarwala R."/>
            <person name="Cherry J.L."/>
            <person name="DiCuccio M."/>
            <person name="Hlavina W."/>
            <person name="Kapustin Y."/>
            <person name="Meric P."/>
            <person name="Maglott D."/>
            <person name="Birtle Z."/>
            <person name="Marques A.C."/>
            <person name="Graves T."/>
            <person name="Zhou S."/>
            <person name="Teague B."/>
            <person name="Potamousis K."/>
            <person name="Churas C."/>
            <person name="Place M."/>
            <person name="Herschleb J."/>
            <person name="Runnheim R."/>
            <person name="Forrest D."/>
            <person name="Amos-Landgraf J."/>
            <person name="Schwartz D.C."/>
            <person name="Cheng Z."/>
            <person name="Lindblad-Toh K."/>
            <person name="Eichler E.E."/>
            <person name="Ponting C.P."/>
        </authorList>
    </citation>
    <scope>NUCLEOTIDE SEQUENCE [LARGE SCALE GENOMIC DNA]</scope>
    <source>
        <strain>C57BL/6J</strain>
    </source>
</reference>
<reference key="3">
    <citation type="journal article" date="1994" name="Biochem. Biophys. Res. Commun.">
        <title>Molecular cloning of human calmitine, a mitochondrial calcium binding protein, reveals identity with calsequestrine.</title>
        <authorList>
            <person name="Bataille N."/>
            <person name="Schmitt N."/>
            <person name="Aumercier-Maes P."/>
            <person name="Ollivier B."/>
            <person name="Lucas-Heron B."/>
            <person name="Lestienne P."/>
        </authorList>
    </citation>
    <scope>PROTEIN SEQUENCE OF 35-47</scope>
    <scope>SUBCELLULAR LOCATION</scope>
    <scope>FUNCTION</scope>
    <scope>TISSUE SPECIFICITY</scope>
    <source>
        <tissue>Skeletal muscle</tissue>
    </source>
</reference>
<reference key="4">
    <citation type="journal article" date="2007" name="J. Physiol. (Lond.)">
        <title>Reorganized stores and impaired calcium handling in skeletal muscle of mice lacking calsequestrin-1.</title>
        <authorList>
            <person name="Paolini C."/>
            <person name="Quarta M."/>
            <person name="Nori A."/>
            <person name="Boncompagni S."/>
            <person name="Canato M."/>
            <person name="Volpe P."/>
            <person name="Allen P.D."/>
            <person name="Reggiani C."/>
            <person name="Protasi F."/>
        </authorList>
    </citation>
    <scope>DISRUPTION PHENOTYPE</scope>
    <scope>FUNCTION</scope>
    <scope>TISSUE SPECIFICITY</scope>
</reference>
<reference key="5">
    <citation type="journal article" date="2010" name="Cell">
        <title>A tissue-specific atlas of mouse protein phosphorylation and expression.</title>
        <authorList>
            <person name="Huttlin E.L."/>
            <person name="Jedrychowski M.P."/>
            <person name="Elias J.E."/>
            <person name="Goswami T."/>
            <person name="Rad R."/>
            <person name="Beausoleil S.A."/>
            <person name="Villen J."/>
            <person name="Haas W."/>
            <person name="Sowa M.E."/>
            <person name="Gygi S.P."/>
        </authorList>
    </citation>
    <scope>IDENTIFICATION BY MASS SPECTROMETRY [LARGE SCALE ANALYSIS]</scope>
    <source>
        <tissue>Brown adipose tissue</tissue>
        <tissue>Heart</tissue>
        <tissue>Lung</tissue>
    </source>
</reference>
<reference key="6">
    <citation type="journal article" date="2012" name="Am. J. Physiol.">
        <title>Calsequestrin (CASQ1) rescues function and structure of calcium release units in skeletal muscles of CASQ1-null mice.</title>
        <authorList>
            <person name="Tomasi M."/>
            <person name="Canato M."/>
            <person name="Paolini C."/>
            <person name="Dainese M."/>
            <person name="Reggiani C."/>
            <person name="Volpe P."/>
            <person name="Protasi F."/>
            <person name="Nori A."/>
        </authorList>
    </citation>
    <scope>FUNCTION</scope>
    <scope>SUBCELLULAR LOCATION</scope>
    <scope>TISSUE SPECIFICITY</scope>
</reference>
<protein>
    <recommendedName>
        <fullName>Calsequestrin-1</fullName>
    </recommendedName>
    <alternativeName>
        <fullName evidence="10">Calmitine</fullName>
    </alternativeName>
    <alternativeName>
        <fullName>Calsequestrin, skeletal muscle isoform</fullName>
    </alternativeName>
</protein>
<keyword id="KW-0106">Calcium</keyword>
<keyword id="KW-0903">Direct protein sequencing</keyword>
<keyword id="KW-0256">Endoplasmic reticulum</keyword>
<keyword id="KW-0325">Glycoprotein</keyword>
<keyword id="KW-0472">Membrane</keyword>
<keyword id="KW-0479">Metal-binding</keyword>
<keyword id="KW-0496">Mitochondrion</keyword>
<keyword id="KW-0514">Muscle protein</keyword>
<keyword id="KW-0597">Phosphoprotein</keyword>
<keyword id="KW-1185">Reference proteome</keyword>
<keyword id="KW-0703">Sarcoplasmic reticulum</keyword>
<keyword id="KW-0732">Signal</keyword>
<organism>
    <name type="scientific">Mus musculus</name>
    <name type="common">Mouse</name>
    <dbReference type="NCBI Taxonomy" id="10090"/>
    <lineage>
        <taxon>Eukaryota</taxon>
        <taxon>Metazoa</taxon>
        <taxon>Chordata</taxon>
        <taxon>Craniata</taxon>
        <taxon>Vertebrata</taxon>
        <taxon>Euteleostomi</taxon>
        <taxon>Mammalia</taxon>
        <taxon>Eutheria</taxon>
        <taxon>Euarchontoglires</taxon>
        <taxon>Glires</taxon>
        <taxon>Rodentia</taxon>
        <taxon>Myomorpha</taxon>
        <taxon>Muroidea</taxon>
        <taxon>Muridae</taxon>
        <taxon>Murinae</taxon>
        <taxon>Mus</taxon>
        <taxon>Mus</taxon>
    </lineage>
</organism>
<dbReference type="EMBL" id="U93291">
    <property type="protein sequence ID" value="AAC63616.1"/>
    <property type="status" value="ALT_INIT"/>
    <property type="molecule type" value="mRNA"/>
</dbReference>
<dbReference type="EMBL" id="AC074310">
    <property type="status" value="NOT_ANNOTATED_CDS"/>
    <property type="molecule type" value="Genomic_DNA"/>
</dbReference>
<dbReference type="CCDS" id="CCDS35781.2"/>
<dbReference type="RefSeq" id="NP_033943.2">
    <property type="nucleotide sequence ID" value="NM_009813.2"/>
</dbReference>
<dbReference type="SMR" id="O09165"/>
<dbReference type="BioGRID" id="198502">
    <property type="interactions" value="1"/>
</dbReference>
<dbReference type="FunCoup" id="O09165">
    <property type="interactions" value="272"/>
</dbReference>
<dbReference type="STRING" id="10090.ENSMUSP00000003554"/>
<dbReference type="GlyCosmos" id="O09165">
    <property type="glycosylation" value="1 site, No reported glycans"/>
</dbReference>
<dbReference type="GlyGen" id="O09165">
    <property type="glycosylation" value="1 site"/>
</dbReference>
<dbReference type="iPTMnet" id="O09165"/>
<dbReference type="PhosphoSitePlus" id="O09165"/>
<dbReference type="jPOST" id="O09165"/>
<dbReference type="PaxDb" id="10090-ENSMUSP00000003554"/>
<dbReference type="PeptideAtlas" id="O09165"/>
<dbReference type="ProteomicsDB" id="281218"/>
<dbReference type="Antibodypedia" id="1664">
    <property type="antibodies" value="150 antibodies from 27 providers"/>
</dbReference>
<dbReference type="DNASU" id="12372"/>
<dbReference type="Ensembl" id="ENSMUST00000003554.11">
    <property type="protein sequence ID" value="ENSMUSP00000003554.5"/>
    <property type="gene ID" value="ENSMUSG00000007122.12"/>
</dbReference>
<dbReference type="GeneID" id="12372"/>
<dbReference type="KEGG" id="mmu:12372"/>
<dbReference type="UCSC" id="uc007dqa.2">
    <property type="organism name" value="mouse"/>
</dbReference>
<dbReference type="AGR" id="MGI:1309468"/>
<dbReference type="CTD" id="844"/>
<dbReference type="MGI" id="MGI:1309468">
    <property type="gene designation" value="Casq1"/>
</dbReference>
<dbReference type="VEuPathDB" id="HostDB:ENSMUSG00000007122"/>
<dbReference type="eggNOG" id="ENOG502QQUJ">
    <property type="taxonomic scope" value="Eukaryota"/>
</dbReference>
<dbReference type="GeneTree" id="ENSGT00390000019377"/>
<dbReference type="HOGENOM" id="CLU_036303_1_0_1"/>
<dbReference type="InParanoid" id="O09165"/>
<dbReference type="OMA" id="WMEMDNE"/>
<dbReference type="OrthoDB" id="10038131at2759"/>
<dbReference type="PhylomeDB" id="O09165"/>
<dbReference type="TreeFam" id="TF313796"/>
<dbReference type="Reactome" id="R-MMU-2672351">
    <property type="pathway name" value="Stimuli-sensing channels"/>
</dbReference>
<dbReference type="Reactome" id="R-MMU-5578775">
    <property type="pathway name" value="Ion homeostasis"/>
</dbReference>
<dbReference type="BioGRID-ORCS" id="12372">
    <property type="hits" value="2 hits in 77 CRISPR screens"/>
</dbReference>
<dbReference type="ChiTaRS" id="Casq1">
    <property type="organism name" value="mouse"/>
</dbReference>
<dbReference type="PRO" id="PR:O09165"/>
<dbReference type="Proteomes" id="UP000000589">
    <property type="component" value="Chromosome 1"/>
</dbReference>
<dbReference type="RNAct" id="O09165">
    <property type="molecule type" value="protein"/>
</dbReference>
<dbReference type="Bgee" id="ENSMUSG00000007122">
    <property type="expression patterns" value="Expressed in triceps brachii and 135 other cell types or tissues"/>
</dbReference>
<dbReference type="ExpressionAtlas" id="O09165">
    <property type="expression patterns" value="baseline and differential"/>
</dbReference>
<dbReference type="GO" id="GO:0031674">
    <property type="term" value="C:I band"/>
    <property type="evidence" value="ECO:0007669"/>
    <property type="project" value="Ensembl"/>
</dbReference>
<dbReference type="GO" id="GO:0005759">
    <property type="term" value="C:mitochondrial matrix"/>
    <property type="evidence" value="ECO:0000314"/>
    <property type="project" value="UniProtKB"/>
</dbReference>
<dbReference type="GO" id="GO:0005739">
    <property type="term" value="C:mitochondrion"/>
    <property type="evidence" value="ECO:0007005"/>
    <property type="project" value="MGI"/>
</dbReference>
<dbReference type="GO" id="GO:0016529">
    <property type="term" value="C:sarcoplasmic reticulum"/>
    <property type="evidence" value="ECO:0000314"/>
    <property type="project" value="UniProtKB"/>
</dbReference>
<dbReference type="GO" id="GO:0033018">
    <property type="term" value="C:sarcoplasmic reticulum lumen"/>
    <property type="evidence" value="ECO:0000314"/>
    <property type="project" value="UniProtKB"/>
</dbReference>
<dbReference type="GO" id="GO:0033017">
    <property type="term" value="C:sarcoplasmic reticulum membrane"/>
    <property type="evidence" value="ECO:0007669"/>
    <property type="project" value="UniProtKB-SubCell"/>
</dbReference>
<dbReference type="GO" id="GO:0030315">
    <property type="term" value="C:T-tubule"/>
    <property type="evidence" value="ECO:0007669"/>
    <property type="project" value="Ensembl"/>
</dbReference>
<dbReference type="GO" id="GO:0014804">
    <property type="term" value="C:terminal cisterna lumen"/>
    <property type="evidence" value="ECO:0007669"/>
    <property type="project" value="Ensembl"/>
</dbReference>
<dbReference type="GO" id="GO:0005509">
    <property type="term" value="F:calcium ion binding"/>
    <property type="evidence" value="ECO:0000314"/>
    <property type="project" value="UniProtKB"/>
</dbReference>
<dbReference type="GO" id="GO:0042802">
    <property type="term" value="F:identical protein binding"/>
    <property type="evidence" value="ECO:0000250"/>
    <property type="project" value="UniProtKB"/>
</dbReference>
<dbReference type="GO" id="GO:0007029">
    <property type="term" value="P:endoplasmic reticulum organization"/>
    <property type="evidence" value="ECO:0000315"/>
    <property type="project" value="MGI"/>
</dbReference>
<dbReference type="GO" id="GO:0051281">
    <property type="term" value="P:positive regulation of release of sequestered calcium ion into cytosol"/>
    <property type="evidence" value="ECO:0000250"/>
    <property type="project" value="UniProtKB"/>
</dbReference>
<dbReference type="GO" id="GO:1901341">
    <property type="term" value="P:positive regulation of store-operated calcium channel activity"/>
    <property type="evidence" value="ECO:0000250"/>
    <property type="project" value="UniProtKB"/>
</dbReference>
<dbReference type="GO" id="GO:0051258">
    <property type="term" value="P:protein polymerization"/>
    <property type="evidence" value="ECO:0000250"/>
    <property type="project" value="UniProtKB"/>
</dbReference>
<dbReference type="GO" id="GO:0006937">
    <property type="term" value="P:regulation of muscle contraction"/>
    <property type="evidence" value="ECO:0000304"/>
    <property type="project" value="MGI"/>
</dbReference>
<dbReference type="GO" id="GO:0010880">
    <property type="term" value="P:regulation of release of sequestered calcium ion into cytosol by sarcoplasmic reticulum"/>
    <property type="evidence" value="ECO:0000314"/>
    <property type="project" value="MGI"/>
</dbReference>
<dbReference type="GO" id="GO:0014809">
    <property type="term" value="P:regulation of skeletal muscle contraction by regulation of release of sequestered calcium ion"/>
    <property type="evidence" value="ECO:0000315"/>
    <property type="project" value="UniProtKB"/>
</dbReference>
<dbReference type="GO" id="GO:2001256">
    <property type="term" value="P:regulation of store-operated calcium entry"/>
    <property type="evidence" value="ECO:0000250"/>
    <property type="project" value="UniProtKB"/>
</dbReference>
<dbReference type="GO" id="GO:0014894">
    <property type="term" value="P:response to denervation involved in regulation of muscle adaptation"/>
    <property type="evidence" value="ECO:0007669"/>
    <property type="project" value="Ensembl"/>
</dbReference>
<dbReference type="GO" id="GO:0009408">
    <property type="term" value="P:response to heat"/>
    <property type="evidence" value="ECO:0000315"/>
    <property type="project" value="MGI"/>
</dbReference>
<dbReference type="GO" id="GO:0045214">
    <property type="term" value="P:sarcomere organization"/>
    <property type="evidence" value="ECO:0000315"/>
    <property type="project" value="UniProtKB"/>
</dbReference>
<dbReference type="GO" id="GO:0007519">
    <property type="term" value="P:skeletal muscle tissue development"/>
    <property type="evidence" value="ECO:0007669"/>
    <property type="project" value="Ensembl"/>
</dbReference>
<dbReference type="CDD" id="cd03074">
    <property type="entry name" value="PDI_b'_Calsequestrin_C"/>
    <property type="match status" value="1"/>
</dbReference>
<dbReference type="CDD" id="cd03066">
    <property type="entry name" value="PDI_b_Calsequestrin_middle"/>
    <property type="match status" value="1"/>
</dbReference>
<dbReference type="CDD" id="cd03065">
    <property type="entry name" value="PDI_b_Calsequestrin_N"/>
    <property type="match status" value="1"/>
</dbReference>
<dbReference type="FunFam" id="3.40.30.10:FF:000031">
    <property type="entry name" value="Calsequestrin"/>
    <property type="match status" value="1"/>
</dbReference>
<dbReference type="FunFam" id="3.40.30.10:FF:000033">
    <property type="entry name" value="Calsequestrin"/>
    <property type="match status" value="1"/>
</dbReference>
<dbReference type="FunFam" id="3.40.30.10:FF:000047">
    <property type="entry name" value="Calsequestrin"/>
    <property type="match status" value="1"/>
</dbReference>
<dbReference type="Gene3D" id="3.40.30.10">
    <property type="entry name" value="Glutaredoxin"/>
    <property type="match status" value="3"/>
</dbReference>
<dbReference type="InterPro" id="IPR001393">
    <property type="entry name" value="Calsequestrin"/>
</dbReference>
<dbReference type="InterPro" id="IPR041860">
    <property type="entry name" value="Calsequestrin_C"/>
</dbReference>
<dbReference type="InterPro" id="IPR018233">
    <property type="entry name" value="Calsequestrin_CS"/>
</dbReference>
<dbReference type="InterPro" id="IPR041858">
    <property type="entry name" value="Calsequestrin_middle_dom"/>
</dbReference>
<dbReference type="InterPro" id="IPR041859">
    <property type="entry name" value="Calsequestrin_N"/>
</dbReference>
<dbReference type="InterPro" id="IPR036249">
    <property type="entry name" value="Thioredoxin-like_sf"/>
</dbReference>
<dbReference type="PANTHER" id="PTHR10033">
    <property type="entry name" value="CALSEQUESTRIN"/>
    <property type="match status" value="1"/>
</dbReference>
<dbReference type="PANTHER" id="PTHR10033:SF14">
    <property type="entry name" value="CALSEQUESTRIN-1"/>
    <property type="match status" value="1"/>
</dbReference>
<dbReference type="Pfam" id="PF01216">
    <property type="entry name" value="Calsequestrin"/>
    <property type="match status" value="1"/>
</dbReference>
<dbReference type="PRINTS" id="PR00312">
    <property type="entry name" value="CALSEQUESTRN"/>
</dbReference>
<dbReference type="SUPFAM" id="SSF52833">
    <property type="entry name" value="Thioredoxin-like"/>
    <property type="match status" value="3"/>
</dbReference>
<dbReference type="PROSITE" id="PS00863">
    <property type="entry name" value="CALSEQUESTRIN_1"/>
    <property type="match status" value="1"/>
</dbReference>
<dbReference type="PROSITE" id="PS00864">
    <property type="entry name" value="CALSEQUESTRIN_2"/>
    <property type="match status" value="1"/>
</dbReference>
<proteinExistence type="evidence at protein level"/>
<name>CASQ1_MOUSE</name>